<evidence type="ECO:0000255" key="1">
    <source>
        <dbReference type="HAMAP-Rule" id="MF_00757"/>
    </source>
</evidence>
<gene>
    <name evidence="1" type="primary">rnp4</name>
    <name type="ordered locus">YG5714_0042</name>
</gene>
<reference key="1">
    <citation type="journal article" date="2009" name="Proc. Natl. Acad. Sci. U.S.A.">
        <title>Biogeography of the Sulfolobus islandicus pan-genome.</title>
        <authorList>
            <person name="Reno M.L."/>
            <person name="Held N.L."/>
            <person name="Fields C.J."/>
            <person name="Burke P.V."/>
            <person name="Whitaker R.J."/>
        </authorList>
    </citation>
    <scope>NUCLEOTIDE SEQUENCE [LARGE SCALE GENOMIC DNA]</scope>
    <source>
        <strain>Y.G.57.14 / Yellowstone #1</strain>
    </source>
</reference>
<comment type="function">
    <text evidence="1">Part of ribonuclease P, a protein complex that generates mature tRNA molecules by cleaving their 5'-ends.</text>
</comment>
<comment type="catalytic activity">
    <reaction evidence="1">
        <text>Endonucleolytic cleavage of RNA, removing 5'-extranucleotides from tRNA precursor.</text>
        <dbReference type="EC" id="3.1.26.5"/>
    </reaction>
</comment>
<comment type="cofactor">
    <cofactor evidence="1">
        <name>Zn(2+)</name>
        <dbReference type="ChEBI" id="CHEBI:29105"/>
    </cofactor>
    <text evidence="1">Binds 1 zinc ion per subunit.</text>
</comment>
<comment type="subunit">
    <text evidence="1">Consists of a catalytic RNA component and at least 4-5 protein subunits.</text>
</comment>
<comment type="subcellular location">
    <subcellularLocation>
        <location evidence="1">Cytoplasm</location>
    </subcellularLocation>
</comment>
<comment type="similarity">
    <text evidence="1">Belongs to the eukaryotic/archaeal RNase P protein component 4 family.</text>
</comment>
<protein>
    <recommendedName>
        <fullName evidence="1">Ribonuclease P protein component 4</fullName>
        <shortName evidence="1">RNase P component 4</shortName>
        <ecNumber evidence="1">3.1.26.5</ecNumber>
    </recommendedName>
    <alternativeName>
        <fullName evidence="1">Rpp21</fullName>
    </alternativeName>
</protein>
<sequence length="104" mass="12622">MRIKNKIKKRIIELIELAYITARKGDLELAREYIKLAEMYSRKGRIKIPLKYKRMFCRKCYTPLITGVTERRRIRSKILIRTCLICNWQRRYVLSRNKGSNKEN</sequence>
<dbReference type="EC" id="3.1.26.5" evidence="1"/>
<dbReference type="EMBL" id="CP001403">
    <property type="protein sequence ID" value="ACP44336.1"/>
    <property type="molecule type" value="Genomic_DNA"/>
</dbReference>
<dbReference type="RefSeq" id="WP_012712725.1">
    <property type="nucleotide sequence ID" value="NC_012622.1"/>
</dbReference>
<dbReference type="SMR" id="C3N7W8"/>
<dbReference type="KEGG" id="siy:YG5714_0042"/>
<dbReference type="HOGENOM" id="CLU_079140_3_1_2"/>
<dbReference type="Proteomes" id="UP000002308">
    <property type="component" value="Chromosome"/>
</dbReference>
<dbReference type="GO" id="GO:0005737">
    <property type="term" value="C:cytoplasm"/>
    <property type="evidence" value="ECO:0007669"/>
    <property type="project" value="UniProtKB-SubCell"/>
</dbReference>
<dbReference type="GO" id="GO:0030677">
    <property type="term" value="C:ribonuclease P complex"/>
    <property type="evidence" value="ECO:0007669"/>
    <property type="project" value="UniProtKB-UniRule"/>
</dbReference>
<dbReference type="GO" id="GO:0004526">
    <property type="term" value="F:ribonuclease P activity"/>
    <property type="evidence" value="ECO:0007669"/>
    <property type="project" value="UniProtKB-UniRule"/>
</dbReference>
<dbReference type="GO" id="GO:0008270">
    <property type="term" value="F:zinc ion binding"/>
    <property type="evidence" value="ECO:0007669"/>
    <property type="project" value="UniProtKB-UniRule"/>
</dbReference>
<dbReference type="GO" id="GO:0001682">
    <property type="term" value="P:tRNA 5'-leader removal"/>
    <property type="evidence" value="ECO:0007669"/>
    <property type="project" value="UniProtKB-UniRule"/>
</dbReference>
<dbReference type="Gene3D" id="6.20.50.20">
    <property type="match status" value="1"/>
</dbReference>
<dbReference type="Gene3D" id="1.20.5.420">
    <property type="entry name" value="Immunoglobulin FC, subunit C"/>
    <property type="match status" value="1"/>
</dbReference>
<dbReference type="HAMAP" id="MF_00757">
    <property type="entry name" value="RNase_P_4"/>
    <property type="match status" value="1"/>
</dbReference>
<dbReference type="InterPro" id="IPR016432">
    <property type="entry name" value="RNP4"/>
</dbReference>
<dbReference type="InterPro" id="IPR007175">
    <property type="entry name" value="Rpr2/Snm1/Rpp21"/>
</dbReference>
<dbReference type="PANTHER" id="PTHR14742:SF0">
    <property type="entry name" value="RIBONUCLEASE P PROTEIN SUBUNIT P21"/>
    <property type="match status" value="1"/>
</dbReference>
<dbReference type="PANTHER" id="PTHR14742">
    <property type="entry name" value="RIBONUCLEASE P SUBUNIT P21"/>
    <property type="match status" value="1"/>
</dbReference>
<dbReference type="Pfam" id="PF04032">
    <property type="entry name" value="Rpr2"/>
    <property type="match status" value="1"/>
</dbReference>
<dbReference type="PIRSF" id="PIRSF004878">
    <property type="entry name" value="RNase_P_4"/>
    <property type="match status" value="1"/>
</dbReference>
<name>RNP4_SACI7</name>
<feature type="chain" id="PRO_1000212867" description="Ribonuclease P protein component 4">
    <location>
        <begin position="1"/>
        <end position="104"/>
    </location>
</feature>
<feature type="binding site" evidence="1">
    <location>
        <position position="57"/>
    </location>
    <ligand>
        <name>Zn(2+)</name>
        <dbReference type="ChEBI" id="CHEBI:29105"/>
    </ligand>
</feature>
<feature type="binding site" evidence="1">
    <location>
        <position position="60"/>
    </location>
    <ligand>
        <name>Zn(2+)</name>
        <dbReference type="ChEBI" id="CHEBI:29105"/>
    </ligand>
</feature>
<feature type="binding site" evidence="1">
    <location>
        <position position="83"/>
    </location>
    <ligand>
        <name>Zn(2+)</name>
        <dbReference type="ChEBI" id="CHEBI:29105"/>
    </ligand>
</feature>
<feature type="binding site" evidence="1">
    <location>
        <position position="86"/>
    </location>
    <ligand>
        <name>Zn(2+)</name>
        <dbReference type="ChEBI" id="CHEBI:29105"/>
    </ligand>
</feature>
<accession>C3N7W8</accession>
<proteinExistence type="inferred from homology"/>
<organism>
    <name type="scientific">Saccharolobus islandicus (strain Y.G.57.14 / Yellowstone #1)</name>
    <name type="common">Sulfolobus islandicus</name>
    <dbReference type="NCBI Taxonomy" id="439386"/>
    <lineage>
        <taxon>Archaea</taxon>
        <taxon>Thermoproteota</taxon>
        <taxon>Thermoprotei</taxon>
        <taxon>Sulfolobales</taxon>
        <taxon>Sulfolobaceae</taxon>
        <taxon>Saccharolobus</taxon>
    </lineage>
</organism>
<keyword id="KW-0963">Cytoplasm</keyword>
<keyword id="KW-0255">Endonuclease</keyword>
<keyword id="KW-0378">Hydrolase</keyword>
<keyword id="KW-0479">Metal-binding</keyword>
<keyword id="KW-0540">Nuclease</keyword>
<keyword id="KW-0819">tRNA processing</keyword>
<keyword id="KW-0862">Zinc</keyword>